<protein>
    <recommendedName>
        <fullName evidence="2">Ribosome biogenesis protein YTM1</fullName>
    </recommendedName>
</protein>
<name>YTM1_VANPO</name>
<proteinExistence type="inferred from homology"/>
<evidence type="ECO:0000250" key="1"/>
<evidence type="ECO:0000255" key="2">
    <source>
        <dbReference type="HAMAP-Rule" id="MF_03029"/>
    </source>
</evidence>
<comment type="function">
    <text evidence="2">Component of the NOP7 complex, which is required for maturation of the 25S and 5.8S ribosomal RNAs and formation of the 60S ribosome.</text>
</comment>
<comment type="subunit">
    <text evidence="2">Component of the NOP7 complex, composed of ERB1, NOP7 and YTM1. The complex is held together by ERB1, which interacts with NOP7 via its N-terminal domain and with YTM1 via a high-affinity interaction between the seven-bladed beta-propeller domains of the 2 proteins. The NOP7 complex associates with the 66S pre-ribosome. Interacts (via UBL domain) with MDN1 (via VWFA/MIDAS domain).</text>
</comment>
<comment type="subcellular location">
    <subcellularLocation>
        <location evidence="2">Nucleus</location>
        <location evidence="2">Nucleolus</location>
    </subcellularLocation>
    <subcellularLocation>
        <location evidence="2">Nucleus</location>
        <location evidence="2">Nucleoplasm</location>
    </subcellularLocation>
</comment>
<comment type="similarity">
    <text evidence="2">Belongs to the WD repeat WDR12/YTM1 family.</text>
</comment>
<organism>
    <name type="scientific">Vanderwaltozyma polyspora (strain ATCC 22028 / DSM 70294 / BCRC 21397 / CBS 2163 / NBRC 10782 / NRRL Y-8283 / UCD 57-17)</name>
    <name type="common">Kluyveromyces polysporus</name>
    <dbReference type="NCBI Taxonomy" id="436907"/>
    <lineage>
        <taxon>Eukaryota</taxon>
        <taxon>Fungi</taxon>
        <taxon>Dikarya</taxon>
        <taxon>Ascomycota</taxon>
        <taxon>Saccharomycotina</taxon>
        <taxon>Saccharomycetes</taxon>
        <taxon>Saccharomycetales</taxon>
        <taxon>Saccharomycetaceae</taxon>
        <taxon>Vanderwaltozyma</taxon>
    </lineage>
</organism>
<dbReference type="EMBL" id="DS480422">
    <property type="protein sequence ID" value="EDO16553.1"/>
    <property type="molecule type" value="Genomic_DNA"/>
</dbReference>
<dbReference type="RefSeq" id="XP_001644411.1">
    <property type="nucleotide sequence ID" value="XM_001644361.1"/>
</dbReference>
<dbReference type="SMR" id="A7TMF9"/>
<dbReference type="FunCoup" id="A7TMF9">
    <property type="interactions" value="992"/>
</dbReference>
<dbReference type="STRING" id="436907.A7TMF9"/>
<dbReference type="GeneID" id="5544684"/>
<dbReference type="KEGG" id="vpo:Kpol_1064p35"/>
<dbReference type="eggNOG" id="KOG0313">
    <property type="taxonomic scope" value="Eukaryota"/>
</dbReference>
<dbReference type="HOGENOM" id="CLU_000288_57_0_1"/>
<dbReference type="InParanoid" id="A7TMF9"/>
<dbReference type="OMA" id="DHKYVEF"/>
<dbReference type="OrthoDB" id="10251381at2759"/>
<dbReference type="PhylomeDB" id="A7TMF9"/>
<dbReference type="Proteomes" id="UP000000267">
    <property type="component" value="Unassembled WGS sequence"/>
</dbReference>
<dbReference type="GO" id="GO:0005654">
    <property type="term" value="C:nucleoplasm"/>
    <property type="evidence" value="ECO:0007669"/>
    <property type="project" value="UniProtKB-SubCell"/>
</dbReference>
<dbReference type="GO" id="GO:0070545">
    <property type="term" value="C:PeBoW complex"/>
    <property type="evidence" value="ECO:0007669"/>
    <property type="project" value="EnsemblFungi"/>
</dbReference>
<dbReference type="GO" id="GO:0030687">
    <property type="term" value="C:preribosome, large subunit precursor"/>
    <property type="evidence" value="ECO:0007669"/>
    <property type="project" value="UniProtKB-UniRule"/>
</dbReference>
<dbReference type="GO" id="GO:0043021">
    <property type="term" value="F:ribonucleoprotein complex binding"/>
    <property type="evidence" value="ECO:0007669"/>
    <property type="project" value="UniProtKB-UniRule"/>
</dbReference>
<dbReference type="GO" id="GO:0051276">
    <property type="term" value="P:chromosome organization"/>
    <property type="evidence" value="ECO:0007669"/>
    <property type="project" value="EnsemblFungi"/>
</dbReference>
<dbReference type="GO" id="GO:0000466">
    <property type="term" value="P:maturation of 5.8S rRNA from tricistronic rRNA transcript (SSU-rRNA, 5.8S rRNA, LSU-rRNA)"/>
    <property type="evidence" value="ECO:0007669"/>
    <property type="project" value="UniProtKB-UniRule"/>
</dbReference>
<dbReference type="GO" id="GO:0000463">
    <property type="term" value="P:maturation of LSU-rRNA from tricistronic rRNA transcript (SSU-rRNA, 5.8S rRNA, LSU-rRNA)"/>
    <property type="evidence" value="ECO:0007669"/>
    <property type="project" value="UniProtKB-UniRule"/>
</dbReference>
<dbReference type="GO" id="GO:0110136">
    <property type="term" value="P:protein-RNA complex remodeling"/>
    <property type="evidence" value="ECO:0007669"/>
    <property type="project" value="EnsemblFungi"/>
</dbReference>
<dbReference type="CDD" id="cd00200">
    <property type="entry name" value="WD40"/>
    <property type="match status" value="1"/>
</dbReference>
<dbReference type="FunFam" id="2.130.10.10:FF:000706">
    <property type="entry name" value="Ribosome biogenesis protein YTM1"/>
    <property type="match status" value="1"/>
</dbReference>
<dbReference type="Gene3D" id="2.130.10.10">
    <property type="entry name" value="YVTN repeat-like/Quinoprotein amine dehydrogenase"/>
    <property type="match status" value="1"/>
</dbReference>
<dbReference type="HAMAP" id="MF_03029">
    <property type="entry name" value="WDR12"/>
    <property type="match status" value="1"/>
</dbReference>
<dbReference type="InterPro" id="IPR020472">
    <property type="entry name" value="G-protein_beta_WD-40_rep"/>
</dbReference>
<dbReference type="InterPro" id="IPR012972">
    <property type="entry name" value="NLE"/>
</dbReference>
<dbReference type="InterPro" id="IPR015943">
    <property type="entry name" value="WD40/YVTN_repeat-like_dom_sf"/>
</dbReference>
<dbReference type="InterPro" id="IPR019775">
    <property type="entry name" value="WD40_repeat_CS"/>
</dbReference>
<dbReference type="InterPro" id="IPR036322">
    <property type="entry name" value="WD40_repeat_dom_sf"/>
</dbReference>
<dbReference type="InterPro" id="IPR001680">
    <property type="entry name" value="WD40_rpt"/>
</dbReference>
<dbReference type="InterPro" id="IPR028599">
    <property type="entry name" value="WDR12/Ytm1"/>
</dbReference>
<dbReference type="PANTHER" id="PTHR19855:SF11">
    <property type="entry name" value="RIBOSOME BIOGENESIS PROTEIN WDR12"/>
    <property type="match status" value="1"/>
</dbReference>
<dbReference type="PANTHER" id="PTHR19855">
    <property type="entry name" value="WD40 REPEAT PROTEIN 12, 37"/>
    <property type="match status" value="1"/>
</dbReference>
<dbReference type="Pfam" id="PF08154">
    <property type="entry name" value="NLE"/>
    <property type="match status" value="1"/>
</dbReference>
<dbReference type="Pfam" id="PF00400">
    <property type="entry name" value="WD40"/>
    <property type="match status" value="5"/>
</dbReference>
<dbReference type="PRINTS" id="PR00320">
    <property type="entry name" value="GPROTEINBRPT"/>
</dbReference>
<dbReference type="SMART" id="SM00320">
    <property type="entry name" value="WD40"/>
    <property type="match status" value="7"/>
</dbReference>
<dbReference type="SUPFAM" id="SSF50978">
    <property type="entry name" value="WD40 repeat-like"/>
    <property type="match status" value="1"/>
</dbReference>
<dbReference type="PROSITE" id="PS00678">
    <property type="entry name" value="WD_REPEATS_1"/>
    <property type="match status" value="2"/>
</dbReference>
<dbReference type="PROSITE" id="PS50082">
    <property type="entry name" value="WD_REPEATS_2"/>
    <property type="match status" value="4"/>
</dbReference>
<dbReference type="PROSITE" id="PS50294">
    <property type="entry name" value="WD_REPEATS_REGION"/>
    <property type="match status" value="1"/>
</dbReference>
<keyword id="KW-0539">Nucleus</keyword>
<keyword id="KW-1185">Reference proteome</keyword>
<keyword id="KW-0677">Repeat</keyword>
<keyword id="KW-0690">Ribosome biogenesis</keyword>
<keyword id="KW-0698">rRNA processing</keyword>
<keyword id="KW-0853">WD repeat</keyword>
<accession>A7TMF9</accession>
<feature type="chain" id="PRO_0000369602" description="Ribosome biogenesis protein YTM1">
    <location>
        <begin position="1"/>
        <end position="453"/>
    </location>
</feature>
<feature type="repeat" description="WD 1">
    <location>
        <begin position="101"/>
        <end position="139"/>
    </location>
</feature>
<feature type="repeat" description="WD 2">
    <location>
        <begin position="141"/>
        <end position="179"/>
    </location>
</feature>
<feature type="repeat" description="WD 3">
    <location>
        <begin position="199"/>
        <end position="237"/>
    </location>
</feature>
<feature type="repeat" description="WD 4">
    <location>
        <begin position="278"/>
        <end position="318"/>
    </location>
</feature>
<feature type="repeat" description="WD 5">
    <location>
        <begin position="320"/>
        <end position="359"/>
    </location>
</feature>
<feature type="repeat" description="WD 6">
    <location>
        <begin position="366"/>
        <end position="406"/>
    </location>
</feature>
<feature type="repeat" description="WD 7">
    <location>
        <begin position="417"/>
        <end position="453"/>
    </location>
</feature>
<feature type="region of interest" description="Ubiquitin-like (UBL) domain" evidence="2">
    <location>
        <begin position="8"/>
        <end position="89"/>
    </location>
</feature>
<feature type="region of interest" description="Sufficient for interaction with ERB1 and association with 66S pre-ribosomes" evidence="1">
    <location>
        <begin position="99"/>
        <end position="453"/>
    </location>
</feature>
<gene>
    <name evidence="2" type="primary">YTM1</name>
    <name type="ORF">Kpol_1064p35</name>
</gene>
<sequence>MSSDSSQVKLRFFTREQDESLHVQDAPMYAPISLKRYGLSEVVNHLLGFEKPVPFDFLIDGELLRISLQEYLTKHGLSSETFLNVEYTRAVLPPSFLSSFSNEDWVSSLDVGDNNKIISGSYDGVVRTWNLSGKIEKQYSGHSAPIRAVKYISNTRMVSGGNDRTLRLWKTKNEDLKQPVVDEDDEDIEDGKTLAILEGHKAPVVSIDVSDNSRILSGSYDNTIGFWSTIYKEMTVVDPMEELKNNDSKMSTAAKKRRKLTLKDGTIRRRAPLALLESHTGPVEQVSFDFKDNTVGYSISQDHTIKTWDLVTSRCIDTKTTSYSLLSLAQLPTLNLLACGSSARHITLHDPRIGSTSKITQQQLVGHKNFVVSLDTCPENEYMLCSGSHDGTVKVWDVRANSPMYTITREEQSVEKGVNDKVFAVNWSKNVGIISAGQDKKIQINKGDNIFKS</sequence>
<reference key="1">
    <citation type="journal article" date="2007" name="Proc. Natl. Acad. Sci. U.S.A.">
        <title>Independent sorting-out of thousands of duplicated gene pairs in two yeast species descended from a whole-genome duplication.</title>
        <authorList>
            <person name="Scannell D.R."/>
            <person name="Frank A.C."/>
            <person name="Conant G.C."/>
            <person name="Byrne K.P."/>
            <person name="Woolfit M."/>
            <person name="Wolfe K.H."/>
        </authorList>
    </citation>
    <scope>NUCLEOTIDE SEQUENCE [LARGE SCALE GENOMIC DNA]</scope>
    <source>
        <strain>ATCC 22028 / DSM 70294 / BCRC 21397 / CBS 2163 / NBRC 10782 / NRRL Y-8283 / UCD 57-17</strain>
    </source>
</reference>